<protein>
    <recommendedName>
        <fullName>Grainyhead-like protein 2 homolog</fullName>
    </recommendedName>
    <alternativeName>
        <fullName>Transcription factor CP2-like 3</fullName>
    </alternativeName>
</protein>
<keyword id="KW-0010">Activator</keyword>
<keyword id="KW-0238">DNA-binding</keyword>
<keyword id="KW-0472">Membrane</keyword>
<keyword id="KW-0539">Nucleus</keyword>
<keyword id="KW-1185">Reference proteome</keyword>
<keyword id="KW-0804">Transcription</keyword>
<keyword id="KW-0805">Transcription regulation</keyword>
<proteinExistence type="evidence at transcript level"/>
<feature type="chain" id="PRO_0000227996" description="Grainyhead-like protein 2 homolog">
    <location>
        <begin position="1"/>
        <end position="619"/>
    </location>
</feature>
<feature type="domain" description="Grh/CP2 DB" evidence="3">
    <location>
        <begin position="239"/>
        <end position="477"/>
    </location>
</feature>
<feature type="region of interest" description="Transcription activation" evidence="2">
    <location>
        <begin position="1"/>
        <end position="90"/>
    </location>
</feature>
<feature type="region of interest" description="Disordered" evidence="4">
    <location>
        <begin position="86"/>
        <end position="108"/>
    </location>
</feature>
<feature type="region of interest" description="Disordered" evidence="4">
    <location>
        <begin position="125"/>
        <end position="147"/>
    </location>
</feature>
<feature type="region of interest" description="Disordered" evidence="4">
    <location>
        <begin position="423"/>
        <end position="444"/>
    </location>
</feature>
<feature type="compositionally biased region" description="Polar residues" evidence="4">
    <location>
        <begin position="99"/>
        <end position="108"/>
    </location>
</feature>
<feature type="site" description="Important for activation of transcription" evidence="1">
    <location>
        <position position="418"/>
    </location>
</feature>
<feature type="sequence conflict" description="In Ref. 1; CAJ83880." evidence="5" ref="1">
    <original>T</original>
    <variation>I</variation>
    <location>
        <position position="488"/>
    </location>
</feature>
<reference key="1">
    <citation type="submission" date="2006-10" db="EMBL/GenBank/DDBJ databases">
        <authorList>
            <consortium name="Sanger Xenopus tropicalis EST/cDNA project"/>
        </authorList>
    </citation>
    <scope>NUCLEOTIDE SEQUENCE [LARGE SCALE MRNA]</scope>
    <source>
        <tissue>Gastrula</tissue>
    </source>
</reference>
<reference key="2">
    <citation type="submission" date="2004-12" db="EMBL/GenBank/DDBJ databases">
        <authorList>
            <consortium name="NIH - Xenopus Gene Collection (XGC) project"/>
        </authorList>
    </citation>
    <scope>NUCLEOTIDE SEQUENCE [LARGE SCALE MRNA]</scope>
    <source>
        <tissue>Neurula</tissue>
    </source>
</reference>
<sequence>MSQETDNKRLVVLVPNDAVFNPRRAYTSEDEAWKSYLENPLTAATKAMMSINGDEESAAAIGLLYDYYKVPREKRLLSLNKINEGHEDQDKRNCLPANETPSNLSTGENRVQVLKTVPVNLSLNNDTVESSNREKYTTSLSESPQPAPASAVTVVKAEEFTPVFMAPSVPYRSDGEEPRGVIFEQTHFGVHSITTHSDYLKDDQRSTPDSTYNESFKETTEKYRTPSVGTEEFLYEQTASSTFQYTLEATKSLRQKQGEGPMTYLNKGQFYAITLSETGANKCFRHPISKVRSVIMVVFSEDKNRDEQLKYWKYWHSRQHTAKQRVLDIADYKESFNTIGNIEEIAYNAVSFTWDVNEEAKIFITVNCLSTDFSSQKGVKGLPLMIQIDTYSYNNRSNKPIHRAYCQIKVFCDKGAERKIRDEERKQNRKKGKSQAAQAQCNNSADGKLSAVPLQKKSDITFFKTMTDLDVQPVLFIPDVHFGNLQRTGQVFYNTDDDIEGGVLVKRLLRPVDEDYGPPAPKQMKEGSRKVLLYVRKETDEVFDALMLKYPTVKGLLEAISEKYGIPVEKIVKIYKKSKKGILVNMDDNIIEHYSNEDTFILNVESLAEQGYKITLTEI</sequence>
<evidence type="ECO:0000250" key="1">
    <source>
        <dbReference type="UniProtKB" id="Q6ISB3"/>
    </source>
</evidence>
<evidence type="ECO:0000250" key="2">
    <source>
        <dbReference type="UniProtKB" id="Q8K5C0"/>
    </source>
</evidence>
<evidence type="ECO:0000255" key="3">
    <source>
        <dbReference type="PROSITE-ProRule" id="PRU01313"/>
    </source>
</evidence>
<evidence type="ECO:0000256" key="4">
    <source>
        <dbReference type="SAM" id="MobiDB-lite"/>
    </source>
</evidence>
<evidence type="ECO:0000305" key="5"/>
<comment type="function">
    <text evidence="1 2">Transcription factor playing an important role in primary neurulation and in epithelial development. Binds directly to the consensus DNA sequence 5'-AACCGGTT-3' acting as an activator and repressor on distinct target genes.</text>
</comment>
<comment type="subcellular location">
    <subcellularLocation>
        <location evidence="1">Nucleus</location>
    </subcellularLocation>
    <subcellularLocation>
        <location evidence="1">Membrane</location>
    </subcellularLocation>
    <text evidence="1">detected at cell-cell contact areas.</text>
</comment>
<comment type="miscellaneous">
    <text evidence="2">GRHL genes (GRHL1, GRHL2 and GRHL3) show a paradoxal lack of redundancy despite their extensive sequence identity in the DNA-binding and protein dimerization domains and the fact that the core consensus DNA binding sites are identical. They have related but remarkably different functions during embryogenesis because of their differential spatiotemporal expression patterns during development.</text>
</comment>
<comment type="similarity">
    <text evidence="5">Belongs to the grh/CP2 family. Grainyhead subfamily.</text>
</comment>
<accession>Q5M7R9</accession>
<accession>Q28D77</accession>
<organism>
    <name type="scientific">Xenopus tropicalis</name>
    <name type="common">Western clawed frog</name>
    <name type="synonym">Silurana tropicalis</name>
    <dbReference type="NCBI Taxonomy" id="8364"/>
    <lineage>
        <taxon>Eukaryota</taxon>
        <taxon>Metazoa</taxon>
        <taxon>Chordata</taxon>
        <taxon>Craniata</taxon>
        <taxon>Vertebrata</taxon>
        <taxon>Euteleostomi</taxon>
        <taxon>Amphibia</taxon>
        <taxon>Batrachia</taxon>
        <taxon>Anura</taxon>
        <taxon>Pipoidea</taxon>
        <taxon>Pipidae</taxon>
        <taxon>Xenopodinae</taxon>
        <taxon>Xenopus</taxon>
        <taxon>Silurana</taxon>
    </lineage>
</organism>
<gene>
    <name type="primary">grhl2</name>
    <name type="synonym">tfcp2l3</name>
    <name type="ORF">TGas068d14.1</name>
</gene>
<name>GRHL2_XENTR</name>
<dbReference type="EMBL" id="CR855659">
    <property type="protein sequence ID" value="CAJ83880.1"/>
    <property type="molecule type" value="mRNA"/>
</dbReference>
<dbReference type="EMBL" id="BC088489">
    <property type="protein sequence ID" value="AAH88489.1"/>
    <property type="molecule type" value="mRNA"/>
</dbReference>
<dbReference type="RefSeq" id="NP_001011338.1">
    <property type="nucleotide sequence ID" value="NM_001011338.1"/>
</dbReference>
<dbReference type="SMR" id="Q5M7R9"/>
<dbReference type="FunCoup" id="Q5M7R9">
    <property type="interactions" value="1123"/>
</dbReference>
<dbReference type="STRING" id="8364.ENSXETP00000015679"/>
<dbReference type="PaxDb" id="8364-ENSXETP00000014534"/>
<dbReference type="DNASU" id="496802"/>
<dbReference type="GeneID" id="496802"/>
<dbReference type="KEGG" id="xtr:496802"/>
<dbReference type="AGR" id="Xenbase:XB-GENE-485995"/>
<dbReference type="CTD" id="79977"/>
<dbReference type="Xenbase" id="XB-GENE-485995">
    <property type="gene designation" value="grhl2"/>
</dbReference>
<dbReference type="eggNOG" id="KOG4091">
    <property type="taxonomic scope" value="Eukaryota"/>
</dbReference>
<dbReference type="HOGENOM" id="CLU_021156_1_1_1"/>
<dbReference type="InParanoid" id="Q5M7R9"/>
<dbReference type="OMA" id="QAAQTQC"/>
<dbReference type="OrthoDB" id="7680836at2759"/>
<dbReference type="Proteomes" id="UP000008143">
    <property type="component" value="Chromosome 6"/>
</dbReference>
<dbReference type="Bgee" id="ENSXETG00000006632">
    <property type="expression patterns" value="Expressed in mesonephros and 7 other cell types or tissues"/>
</dbReference>
<dbReference type="ExpressionAtlas" id="Q5M7R9">
    <property type="expression patterns" value="baseline"/>
</dbReference>
<dbReference type="GO" id="GO:0005911">
    <property type="term" value="C:cell-cell junction"/>
    <property type="evidence" value="ECO:0000250"/>
    <property type="project" value="UniProtKB"/>
</dbReference>
<dbReference type="GO" id="GO:0016020">
    <property type="term" value="C:membrane"/>
    <property type="evidence" value="ECO:0007669"/>
    <property type="project" value="UniProtKB-SubCell"/>
</dbReference>
<dbReference type="GO" id="GO:0005634">
    <property type="term" value="C:nucleus"/>
    <property type="evidence" value="ECO:0000250"/>
    <property type="project" value="UniProtKB"/>
</dbReference>
<dbReference type="GO" id="GO:0003700">
    <property type="term" value="F:DNA-binding transcription factor activity"/>
    <property type="evidence" value="ECO:0000250"/>
    <property type="project" value="UniProtKB"/>
</dbReference>
<dbReference type="GO" id="GO:0001161">
    <property type="term" value="F:intronic transcription regulatory region sequence-specific DNA binding"/>
    <property type="evidence" value="ECO:0000250"/>
    <property type="project" value="UniProtKB"/>
</dbReference>
<dbReference type="GO" id="GO:0043565">
    <property type="term" value="F:sequence-specific DNA binding"/>
    <property type="evidence" value="ECO:0000250"/>
    <property type="project" value="UniProtKB"/>
</dbReference>
<dbReference type="GO" id="GO:0070830">
    <property type="term" value="P:bicellular tight junction assembly"/>
    <property type="evidence" value="ECO:0000250"/>
    <property type="project" value="UniProtKB"/>
</dbReference>
<dbReference type="GO" id="GO:0007155">
    <property type="term" value="P:cell adhesion"/>
    <property type="evidence" value="ECO:0000250"/>
    <property type="project" value="UniProtKB"/>
</dbReference>
<dbReference type="GO" id="GO:0034329">
    <property type="term" value="P:cell junction assembly"/>
    <property type="evidence" value="ECO:0000250"/>
    <property type="project" value="UniProtKB"/>
</dbReference>
<dbReference type="GO" id="GO:0003382">
    <property type="term" value="P:epithelial cell morphogenesis"/>
    <property type="evidence" value="ECO:0000250"/>
    <property type="project" value="UniProtKB"/>
</dbReference>
<dbReference type="GO" id="GO:0001843">
    <property type="term" value="P:neural tube closure"/>
    <property type="evidence" value="ECO:0000250"/>
    <property type="project" value="UniProtKB"/>
</dbReference>
<dbReference type="GO" id="GO:0045944">
    <property type="term" value="P:positive regulation of transcription by RNA polymerase II"/>
    <property type="evidence" value="ECO:0000250"/>
    <property type="project" value="UniProtKB"/>
</dbReference>
<dbReference type="InterPro" id="IPR007604">
    <property type="entry name" value="CP2"/>
</dbReference>
<dbReference type="InterPro" id="IPR040167">
    <property type="entry name" value="TF_CP2-like"/>
</dbReference>
<dbReference type="PANTHER" id="PTHR11037:SF17">
    <property type="entry name" value="GRAINYHEAD-LIKE PROTEIN 2 HOMOLOG"/>
    <property type="match status" value="1"/>
</dbReference>
<dbReference type="PANTHER" id="PTHR11037">
    <property type="entry name" value="TRANSCRIPTION FACTOR CP2"/>
    <property type="match status" value="1"/>
</dbReference>
<dbReference type="Pfam" id="PF04516">
    <property type="entry name" value="CP2"/>
    <property type="match status" value="1"/>
</dbReference>
<dbReference type="Pfam" id="PF25416">
    <property type="entry name" value="GRHL1_C"/>
    <property type="match status" value="1"/>
</dbReference>
<dbReference type="PROSITE" id="PS51968">
    <property type="entry name" value="GRH_CP2_DB"/>
    <property type="match status" value="1"/>
</dbReference>